<protein>
    <recommendedName>
        <fullName evidence="1">Adenine phosphoribosyltransferase</fullName>
        <shortName evidence="1">APRT</shortName>
        <ecNumber evidence="1">2.4.2.7</ecNumber>
    </recommendedName>
</protein>
<evidence type="ECO:0000255" key="1">
    <source>
        <dbReference type="HAMAP-Rule" id="MF_00004"/>
    </source>
</evidence>
<name>APT_CLOB1</name>
<reference key="1">
    <citation type="journal article" date="2007" name="PLoS ONE">
        <title>Analysis of the neurotoxin complex genes in Clostridium botulinum A1-A4 and B1 strains: BoNT/A3, /Ba4 and /B1 clusters are located within plasmids.</title>
        <authorList>
            <person name="Smith T.J."/>
            <person name="Hill K.K."/>
            <person name="Foley B.T."/>
            <person name="Detter J.C."/>
            <person name="Munk A.C."/>
            <person name="Bruce D.C."/>
            <person name="Doggett N.A."/>
            <person name="Smith L.A."/>
            <person name="Marks J.D."/>
            <person name="Xie G."/>
            <person name="Brettin T.S."/>
        </authorList>
    </citation>
    <scope>NUCLEOTIDE SEQUENCE [LARGE SCALE GENOMIC DNA]</scope>
    <source>
        <strain>ATCC 19397 / Type A</strain>
    </source>
</reference>
<sequence>MNLKEHIRVIENFPKEGISFKDVTTILQDGKVLNYTIDKLAENLKDKKIDKIVGPEARGFLFGTPLAYKLGVGFVPVRKKGKLPYETISCKYDLEYGQDELQIHKDSIKKGDKVAIVDDLLATGGTIASVVKLVEELGGEVVNVSFVIELTDLKGKDKLEGYDINSLVQYNI</sequence>
<dbReference type="EC" id="2.4.2.7" evidence="1"/>
<dbReference type="EMBL" id="CP000726">
    <property type="protein sequence ID" value="ABS33533.1"/>
    <property type="molecule type" value="Genomic_DNA"/>
</dbReference>
<dbReference type="RefSeq" id="WP_003357763.1">
    <property type="nucleotide sequence ID" value="NC_009697.1"/>
</dbReference>
<dbReference type="SMR" id="A7FY09"/>
<dbReference type="KEGG" id="cba:CLB_3089"/>
<dbReference type="HOGENOM" id="CLU_063339_3_0_9"/>
<dbReference type="UniPathway" id="UPA00588">
    <property type="reaction ID" value="UER00646"/>
</dbReference>
<dbReference type="GO" id="GO:0005737">
    <property type="term" value="C:cytoplasm"/>
    <property type="evidence" value="ECO:0007669"/>
    <property type="project" value="UniProtKB-SubCell"/>
</dbReference>
<dbReference type="GO" id="GO:0002055">
    <property type="term" value="F:adenine binding"/>
    <property type="evidence" value="ECO:0007669"/>
    <property type="project" value="TreeGrafter"/>
</dbReference>
<dbReference type="GO" id="GO:0003999">
    <property type="term" value="F:adenine phosphoribosyltransferase activity"/>
    <property type="evidence" value="ECO:0007669"/>
    <property type="project" value="UniProtKB-UniRule"/>
</dbReference>
<dbReference type="GO" id="GO:0016208">
    <property type="term" value="F:AMP binding"/>
    <property type="evidence" value="ECO:0007669"/>
    <property type="project" value="TreeGrafter"/>
</dbReference>
<dbReference type="GO" id="GO:0006168">
    <property type="term" value="P:adenine salvage"/>
    <property type="evidence" value="ECO:0007669"/>
    <property type="project" value="InterPro"/>
</dbReference>
<dbReference type="GO" id="GO:0044209">
    <property type="term" value="P:AMP salvage"/>
    <property type="evidence" value="ECO:0007669"/>
    <property type="project" value="UniProtKB-UniRule"/>
</dbReference>
<dbReference type="GO" id="GO:0006166">
    <property type="term" value="P:purine ribonucleoside salvage"/>
    <property type="evidence" value="ECO:0007669"/>
    <property type="project" value="UniProtKB-KW"/>
</dbReference>
<dbReference type="CDD" id="cd06223">
    <property type="entry name" value="PRTases_typeI"/>
    <property type="match status" value="1"/>
</dbReference>
<dbReference type="FunFam" id="3.40.50.2020:FF:000004">
    <property type="entry name" value="Adenine phosphoribosyltransferase"/>
    <property type="match status" value="1"/>
</dbReference>
<dbReference type="Gene3D" id="3.40.50.2020">
    <property type="match status" value="1"/>
</dbReference>
<dbReference type="HAMAP" id="MF_00004">
    <property type="entry name" value="Aden_phosphoribosyltr"/>
    <property type="match status" value="1"/>
</dbReference>
<dbReference type="InterPro" id="IPR005764">
    <property type="entry name" value="Ade_phspho_trans"/>
</dbReference>
<dbReference type="InterPro" id="IPR000836">
    <property type="entry name" value="PRibTrfase_dom"/>
</dbReference>
<dbReference type="InterPro" id="IPR029057">
    <property type="entry name" value="PRTase-like"/>
</dbReference>
<dbReference type="InterPro" id="IPR050054">
    <property type="entry name" value="UPRTase/APRTase"/>
</dbReference>
<dbReference type="NCBIfam" id="TIGR01090">
    <property type="entry name" value="apt"/>
    <property type="match status" value="1"/>
</dbReference>
<dbReference type="NCBIfam" id="NF002633">
    <property type="entry name" value="PRK02304.1-2"/>
    <property type="match status" value="1"/>
</dbReference>
<dbReference type="NCBIfam" id="NF002634">
    <property type="entry name" value="PRK02304.1-3"/>
    <property type="match status" value="1"/>
</dbReference>
<dbReference type="NCBIfam" id="NF002636">
    <property type="entry name" value="PRK02304.1-5"/>
    <property type="match status" value="1"/>
</dbReference>
<dbReference type="NCBIfam" id="NF009211">
    <property type="entry name" value="PRK12560.1"/>
    <property type="match status" value="1"/>
</dbReference>
<dbReference type="PANTHER" id="PTHR32315">
    <property type="entry name" value="ADENINE PHOSPHORIBOSYLTRANSFERASE"/>
    <property type="match status" value="1"/>
</dbReference>
<dbReference type="PANTHER" id="PTHR32315:SF3">
    <property type="entry name" value="ADENINE PHOSPHORIBOSYLTRANSFERASE"/>
    <property type="match status" value="1"/>
</dbReference>
<dbReference type="Pfam" id="PF00156">
    <property type="entry name" value="Pribosyltran"/>
    <property type="match status" value="1"/>
</dbReference>
<dbReference type="SUPFAM" id="SSF53271">
    <property type="entry name" value="PRTase-like"/>
    <property type="match status" value="1"/>
</dbReference>
<proteinExistence type="inferred from homology"/>
<organism>
    <name type="scientific">Clostridium botulinum (strain ATCC 19397 / Type A)</name>
    <dbReference type="NCBI Taxonomy" id="441770"/>
    <lineage>
        <taxon>Bacteria</taxon>
        <taxon>Bacillati</taxon>
        <taxon>Bacillota</taxon>
        <taxon>Clostridia</taxon>
        <taxon>Eubacteriales</taxon>
        <taxon>Clostridiaceae</taxon>
        <taxon>Clostridium</taxon>
    </lineage>
</organism>
<feature type="chain" id="PRO_0000329339" description="Adenine phosphoribosyltransferase">
    <location>
        <begin position="1"/>
        <end position="172"/>
    </location>
</feature>
<comment type="function">
    <text evidence="1">Catalyzes a salvage reaction resulting in the formation of AMP, that is energically less costly than de novo synthesis.</text>
</comment>
<comment type="catalytic activity">
    <reaction evidence="1">
        <text>AMP + diphosphate = 5-phospho-alpha-D-ribose 1-diphosphate + adenine</text>
        <dbReference type="Rhea" id="RHEA:16609"/>
        <dbReference type="ChEBI" id="CHEBI:16708"/>
        <dbReference type="ChEBI" id="CHEBI:33019"/>
        <dbReference type="ChEBI" id="CHEBI:58017"/>
        <dbReference type="ChEBI" id="CHEBI:456215"/>
        <dbReference type="EC" id="2.4.2.7"/>
    </reaction>
</comment>
<comment type="pathway">
    <text evidence="1">Purine metabolism; AMP biosynthesis via salvage pathway; AMP from adenine: step 1/1.</text>
</comment>
<comment type="subunit">
    <text evidence="1">Homodimer.</text>
</comment>
<comment type="subcellular location">
    <subcellularLocation>
        <location evidence="1">Cytoplasm</location>
    </subcellularLocation>
</comment>
<comment type="similarity">
    <text evidence="1">Belongs to the purine/pyrimidine phosphoribosyltransferase family.</text>
</comment>
<accession>A7FY09</accession>
<keyword id="KW-0963">Cytoplasm</keyword>
<keyword id="KW-0328">Glycosyltransferase</keyword>
<keyword id="KW-0660">Purine salvage</keyword>
<keyword id="KW-0808">Transferase</keyword>
<gene>
    <name evidence="1" type="primary">apt</name>
    <name type="ordered locus">CLB_3089</name>
</gene>